<feature type="chain" id="PRO_0000248725" description="Proline--tRNA ligase">
    <location>
        <begin position="1"/>
        <end position="582"/>
    </location>
</feature>
<comment type="function">
    <text evidence="1">Catalyzes the attachment of proline to tRNA(Pro) in a two-step reaction: proline is first activated by ATP to form Pro-AMP and then transferred to the acceptor end of tRNA(Pro). As ProRS can inadvertently accommodate and process non-cognate amino acids such as alanine and cysteine, to avoid such errors it has two additional distinct editing activities against alanine. One activity is designated as 'pretransfer' editing and involves the tRNA(Pro)-independent hydrolysis of activated Ala-AMP. The other activity is designated 'posttransfer' editing and involves deacylation of mischarged Ala-tRNA(Pro). The misacylated Cys-tRNA(Pro) is not edited by ProRS.</text>
</comment>
<comment type="catalytic activity">
    <reaction evidence="1">
        <text>tRNA(Pro) + L-proline + ATP = L-prolyl-tRNA(Pro) + AMP + diphosphate</text>
        <dbReference type="Rhea" id="RHEA:14305"/>
        <dbReference type="Rhea" id="RHEA-COMP:9700"/>
        <dbReference type="Rhea" id="RHEA-COMP:9702"/>
        <dbReference type="ChEBI" id="CHEBI:30616"/>
        <dbReference type="ChEBI" id="CHEBI:33019"/>
        <dbReference type="ChEBI" id="CHEBI:60039"/>
        <dbReference type="ChEBI" id="CHEBI:78442"/>
        <dbReference type="ChEBI" id="CHEBI:78532"/>
        <dbReference type="ChEBI" id="CHEBI:456215"/>
        <dbReference type="EC" id="6.1.1.15"/>
    </reaction>
</comment>
<comment type="subunit">
    <text evidence="1">Homodimer.</text>
</comment>
<comment type="subcellular location">
    <subcellularLocation>
        <location evidence="1">Cytoplasm</location>
    </subcellularLocation>
</comment>
<comment type="domain">
    <text evidence="1">Consists of three domains: the N-terminal catalytic domain, the editing domain and the C-terminal anticodon-binding domain.</text>
</comment>
<comment type="similarity">
    <text evidence="1">Belongs to the class-II aminoacyl-tRNA synthetase family. ProS type 1 subfamily.</text>
</comment>
<protein>
    <recommendedName>
        <fullName evidence="1">Proline--tRNA ligase</fullName>
        <ecNumber evidence="1">6.1.1.15</ecNumber>
    </recommendedName>
    <alternativeName>
        <fullName evidence="1">Prolyl-tRNA synthetase</fullName>
        <shortName evidence="1">ProRS</shortName>
    </alternativeName>
</protein>
<reference key="1">
    <citation type="journal article" date="2005" name="Proc. Natl. Acad. Sci. U.S.A.">
        <title>The complete genome sequence of Mycobacterium avium subspecies paratuberculosis.</title>
        <authorList>
            <person name="Li L."/>
            <person name="Bannantine J.P."/>
            <person name="Zhang Q."/>
            <person name="Amonsin A."/>
            <person name="May B.J."/>
            <person name="Alt D."/>
            <person name="Banerji N."/>
            <person name="Kanjilal S."/>
            <person name="Kapur V."/>
        </authorList>
    </citation>
    <scope>NUCLEOTIDE SEQUENCE [LARGE SCALE GENOMIC DNA]</scope>
    <source>
        <strain>ATCC BAA-968 / K-10</strain>
    </source>
</reference>
<gene>
    <name evidence="1" type="primary">proS</name>
    <name type="ordered locus">MAP_2913c</name>
</gene>
<name>SYP_MYCPA</name>
<proteinExistence type="inferred from homology"/>
<accession>Q73VU8</accession>
<dbReference type="EC" id="6.1.1.15" evidence="1"/>
<dbReference type="EMBL" id="AE016958">
    <property type="protein sequence ID" value="AAS05230.1"/>
    <property type="molecule type" value="Genomic_DNA"/>
</dbReference>
<dbReference type="RefSeq" id="WP_003878679.1">
    <property type="nucleotide sequence ID" value="NZ_CP106873.1"/>
</dbReference>
<dbReference type="SMR" id="Q73VU8"/>
<dbReference type="STRING" id="262316.MAP_2913c"/>
<dbReference type="KEGG" id="mpa:MAP_2913c"/>
<dbReference type="eggNOG" id="COG0442">
    <property type="taxonomic scope" value="Bacteria"/>
</dbReference>
<dbReference type="HOGENOM" id="CLU_016739_0_0_11"/>
<dbReference type="Proteomes" id="UP000000580">
    <property type="component" value="Chromosome"/>
</dbReference>
<dbReference type="GO" id="GO:0005829">
    <property type="term" value="C:cytosol"/>
    <property type="evidence" value="ECO:0007669"/>
    <property type="project" value="TreeGrafter"/>
</dbReference>
<dbReference type="GO" id="GO:0002161">
    <property type="term" value="F:aminoacyl-tRNA deacylase activity"/>
    <property type="evidence" value="ECO:0007669"/>
    <property type="project" value="InterPro"/>
</dbReference>
<dbReference type="GO" id="GO:0005524">
    <property type="term" value="F:ATP binding"/>
    <property type="evidence" value="ECO:0007669"/>
    <property type="project" value="UniProtKB-UniRule"/>
</dbReference>
<dbReference type="GO" id="GO:0004827">
    <property type="term" value="F:proline-tRNA ligase activity"/>
    <property type="evidence" value="ECO:0007669"/>
    <property type="project" value="UniProtKB-UniRule"/>
</dbReference>
<dbReference type="GO" id="GO:0006433">
    <property type="term" value="P:prolyl-tRNA aminoacylation"/>
    <property type="evidence" value="ECO:0007669"/>
    <property type="project" value="UniProtKB-UniRule"/>
</dbReference>
<dbReference type="CDD" id="cd00861">
    <property type="entry name" value="ProRS_anticodon_short"/>
    <property type="match status" value="1"/>
</dbReference>
<dbReference type="CDD" id="cd00779">
    <property type="entry name" value="ProRS_core_prok"/>
    <property type="match status" value="1"/>
</dbReference>
<dbReference type="FunFam" id="3.30.930.10:FF:000065">
    <property type="entry name" value="Proline--tRNA ligase"/>
    <property type="match status" value="1"/>
</dbReference>
<dbReference type="FunFam" id="3.30.930.10:FF:000070">
    <property type="entry name" value="Proline--tRNA ligase"/>
    <property type="match status" value="1"/>
</dbReference>
<dbReference type="FunFam" id="3.40.50.800:FF:000024">
    <property type="entry name" value="Proline--tRNA ligase"/>
    <property type="match status" value="1"/>
</dbReference>
<dbReference type="Gene3D" id="3.40.50.800">
    <property type="entry name" value="Anticodon-binding domain"/>
    <property type="match status" value="1"/>
</dbReference>
<dbReference type="Gene3D" id="3.30.930.10">
    <property type="entry name" value="Bira Bifunctional Protein, Domain 2"/>
    <property type="match status" value="2"/>
</dbReference>
<dbReference type="Gene3D" id="3.90.960.10">
    <property type="entry name" value="YbaK/aminoacyl-tRNA synthetase-associated domain"/>
    <property type="match status" value="1"/>
</dbReference>
<dbReference type="HAMAP" id="MF_01569">
    <property type="entry name" value="Pro_tRNA_synth_type1"/>
    <property type="match status" value="1"/>
</dbReference>
<dbReference type="InterPro" id="IPR002314">
    <property type="entry name" value="aa-tRNA-synt_IIb"/>
</dbReference>
<dbReference type="InterPro" id="IPR006195">
    <property type="entry name" value="aa-tRNA-synth_II"/>
</dbReference>
<dbReference type="InterPro" id="IPR045864">
    <property type="entry name" value="aa-tRNA-synth_II/BPL/LPL"/>
</dbReference>
<dbReference type="InterPro" id="IPR004154">
    <property type="entry name" value="Anticodon-bd"/>
</dbReference>
<dbReference type="InterPro" id="IPR036621">
    <property type="entry name" value="Anticodon-bd_dom_sf"/>
</dbReference>
<dbReference type="InterPro" id="IPR002316">
    <property type="entry name" value="Pro-tRNA-ligase_IIa"/>
</dbReference>
<dbReference type="InterPro" id="IPR004500">
    <property type="entry name" value="Pro-tRNA-synth_IIa_bac-type"/>
</dbReference>
<dbReference type="InterPro" id="IPR023717">
    <property type="entry name" value="Pro-tRNA-Synthase_IIa_type1"/>
</dbReference>
<dbReference type="InterPro" id="IPR050062">
    <property type="entry name" value="Pro-tRNA_synthetase"/>
</dbReference>
<dbReference type="InterPro" id="IPR044140">
    <property type="entry name" value="ProRS_anticodon_short"/>
</dbReference>
<dbReference type="InterPro" id="IPR033730">
    <property type="entry name" value="ProRS_core_prok"/>
</dbReference>
<dbReference type="InterPro" id="IPR036754">
    <property type="entry name" value="YbaK/aa-tRNA-synt-asso_dom_sf"/>
</dbReference>
<dbReference type="InterPro" id="IPR007214">
    <property type="entry name" value="YbaK/aa-tRNA-synth-assoc-dom"/>
</dbReference>
<dbReference type="NCBIfam" id="NF006625">
    <property type="entry name" value="PRK09194.1"/>
    <property type="match status" value="1"/>
</dbReference>
<dbReference type="NCBIfam" id="TIGR00409">
    <property type="entry name" value="proS_fam_II"/>
    <property type="match status" value="1"/>
</dbReference>
<dbReference type="PANTHER" id="PTHR42753">
    <property type="entry name" value="MITOCHONDRIAL RIBOSOME PROTEIN L39/PROLYL-TRNA LIGASE FAMILY MEMBER"/>
    <property type="match status" value="1"/>
</dbReference>
<dbReference type="PANTHER" id="PTHR42753:SF2">
    <property type="entry name" value="PROLINE--TRNA LIGASE"/>
    <property type="match status" value="1"/>
</dbReference>
<dbReference type="Pfam" id="PF03129">
    <property type="entry name" value="HGTP_anticodon"/>
    <property type="match status" value="1"/>
</dbReference>
<dbReference type="Pfam" id="PF00587">
    <property type="entry name" value="tRNA-synt_2b"/>
    <property type="match status" value="1"/>
</dbReference>
<dbReference type="Pfam" id="PF04073">
    <property type="entry name" value="tRNA_edit"/>
    <property type="match status" value="1"/>
</dbReference>
<dbReference type="PRINTS" id="PR01046">
    <property type="entry name" value="TRNASYNTHPRO"/>
</dbReference>
<dbReference type="SUPFAM" id="SSF52954">
    <property type="entry name" value="Class II aaRS ABD-related"/>
    <property type="match status" value="1"/>
</dbReference>
<dbReference type="SUPFAM" id="SSF55681">
    <property type="entry name" value="Class II aaRS and biotin synthetases"/>
    <property type="match status" value="1"/>
</dbReference>
<dbReference type="SUPFAM" id="SSF55826">
    <property type="entry name" value="YbaK/ProRS associated domain"/>
    <property type="match status" value="1"/>
</dbReference>
<dbReference type="PROSITE" id="PS50862">
    <property type="entry name" value="AA_TRNA_LIGASE_II"/>
    <property type="match status" value="1"/>
</dbReference>
<evidence type="ECO:0000255" key="1">
    <source>
        <dbReference type="HAMAP-Rule" id="MF_01569"/>
    </source>
</evidence>
<organism>
    <name type="scientific">Mycolicibacterium paratuberculosis (strain ATCC BAA-968 / K-10)</name>
    <name type="common">Mycobacterium paratuberculosis</name>
    <dbReference type="NCBI Taxonomy" id="262316"/>
    <lineage>
        <taxon>Bacteria</taxon>
        <taxon>Bacillati</taxon>
        <taxon>Actinomycetota</taxon>
        <taxon>Actinomycetes</taxon>
        <taxon>Mycobacteriales</taxon>
        <taxon>Mycobacteriaceae</taxon>
        <taxon>Mycobacterium</taxon>
        <taxon>Mycobacterium avium complex (MAC)</taxon>
    </lineage>
</organism>
<keyword id="KW-0030">Aminoacyl-tRNA synthetase</keyword>
<keyword id="KW-0067">ATP-binding</keyword>
<keyword id="KW-0963">Cytoplasm</keyword>
<keyword id="KW-0436">Ligase</keyword>
<keyword id="KW-0547">Nucleotide-binding</keyword>
<keyword id="KW-0648">Protein biosynthesis</keyword>
<keyword id="KW-1185">Reference proteome</keyword>
<sequence>MITRMSQLFLRTLRDDPADAEVPSHKLLIRAGYIRPVAPGLYSWLPLGLRVLRRIEHIVREEMNAIGGQEILFPALLPRAPYEATNRWTEYGDSVFRLQDRRGNDYLLGPTHEELFTLTVKGEYSSYKDFPVLLYQIQNKYRDEARPRAGILRVREFVMKDSYSFDIDDAGLKAAYHAHREAYQRIFARLQVRYVIVSAVSGAMGGSASEEFLAESPVGEDTFVRCLESGYAANVEAVITARPDPQPVEGLPEAVVHDTGDTPTIATLVDWANRAGLGRAVTAADTLKNVLLKVRQPGGDWELLAIGLPGDREVDDKRLGAALEPAEYVLLDDADFARYPFLVKGYIGPKALKDNGVRYLVDPRVVDGTSWITGADEPGRHVVGLVAGRDFTADGTIEAAEVRDGDPSPDGAGPLVSARGIEVAHIFQLGRKYTDAFTADVLGEDGKPVRLTMGSYGLGVSRMVAVIAEQHHDELGLRWPASVAPFDVHLVIANKDAQARAGATALADDLDRLGVEVLLDDRQASPGVKFKDAELLGVPWIVVVGRGWADGVVELRDRFAGQTRELATGPSLAADIAAALRG</sequence>